<name>DCUP_GRABC</name>
<feature type="chain" id="PRO_0000325651" description="Uroporphyrinogen decarboxylase">
    <location>
        <begin position="1"/>
        <end position="343"/>
    </location>
</feature>
<feature type="binding site" evidence="1">
    <location>
        <begin position="23"/>
        <end position="27"/>
    </location>
    <ligand>
        <name>substrate</name>
    </ligand>
</feature>
<feature type="binding site" evidence="1">
    <location>
        <position position="73"/>
    </location>
    <ligand>
        <name>substrate</name>
    </ligand>
</feature>
<feature type="binding site" evidence="1">
    <location>
        <position position="151"/>
    </location>
    <ligand>
        <name>substrate</name>
    </ligand>
</feature>
<feature type="binding site" evidence="1">
    <location>
        <position position="206"/>
    </location>
    <ligand>
        <name>substrate</name>
    </ligand>
</feature>
<feature type="binding site" evidence="1">
    <location>
        <position position="322"/>
    </location>
    <ligand>
        <name>substrate</name>
    </ligand>
</feature>
<feature type="site" description="Transition state stabilizer" evidence="1">
    <location>
        <position position="73"/>
    </location>
</feature>
<dbReference type="EC" id="4.1.1.37" evidence="1"/>
<dbReference type="EMBL" id="CP000394">
    <property type="protein sequence ID" value="ABI60900.1"/>
    <property type="molecule type" value="Genomic_DNA"/>
</dbReference>
<dbReference type="RefSeq" id="WP_011630710.1">
    <property type="nucleotide sequence ID" value="NC_008343.2"/>
</dbReference>
<dbReference type="SMR" id="Q0BWA2"/>
<dbReference type="STRING" id="391165.GbCGDNIH1_0002"/>
<dbReference type="KEGG" id="gbe:GbCGDNIH1_0002"/>
<dbReference type="eggNOG" id="COG0407">
    <property type="taxonomic scope" value="Bacteria"/>
</dbReference>
<dbReference type="HOGENOM" id="CLU_040933_0_0_5"/>
<dbReference type="OrthoDB" id="9806656at2"/>
<dbReference type="UniPathway" id="UPA00251">
    <property type="reaction ID" value="UER00321"/>
</dbReference>
<dbReference type="Proteomes" id="UP000001963">
    <property type="component" value="Chromosome"/>
</dbReference>
<dbReference type="GO" id="GO:0005829">
    <property type="term" value="C:cytosol"/>
    <property type="evidence" value="ECO:0007669"/>
    <property type="project" value="TreeGrafter"/>
</dbReference>
<dbReference type="GO" id="GO:0004853">
    <property type="term" value="F:uroporphyrinogen decarboxylase activity"/>
    <property type="evidence" value="ECO:0007669"/>
    <property type="project" value="UniProtKB-UniRule"/>
</dbReference>
<dbReference type="GO" id="GO:0019353">
    <property type="term" value="P:protoporphyrinogen IX biosynthetic process from glutamate"/>
    <property type="evidence" value="ECO:0007669"/>
    <property type="project" value="TreeGrafter"/>
</dbReference>
<dbReference type="CDD" id="cd00717">
    <property type="entry name" value="URO-D"/>
    <property type="match status" value="1"/>
</dbReference>
<dbReference type="FunFam" id="3.20.20.210:FF:000008">
    <property type="entry name" value="Uroporphyrinogen decarboxylase"/>
    <property type="match status" value="1"/>
</dbReference>
<dbReference type="Gene3D" id="3.20.20.210">
    <property type="match status" value="1"/>
</dbReference>
<dbReference type="HAMAP" id="MF_00218">
    <property type="entry name" value="URO_D"/>
    <property type="match status" value="1"/>
</dbReference>
<dbReference type="InterPro" id="IPR038071">
    <property type="entry name" value="UROD/MetE-like_sf"/>
</dbReference>
<dbReference type="InterPro" id="IPR006361">
    <property type="entry name" value="Uroporphyrinogen_deCO2ase_HemE"/>
</dbReference>
<dbReference type="InterPro" id="IPR000257">
    <property type="entry name" value="Uroporphyrinogen_deCOase"/>
</dbReference>
<dbReference type="NCBIfam" id="TIGR01464">
    <property type="entry name" value="hemE"/>
    <property type="match status" value="1"/>
</dbReference>
<dbReference type="PANTHER" id="PTHR21091">
    <property type="entry name" value="METHYLTETRAHYDROFOLATE:HOMOCYSTEINE METHYLTRANSFERASE RELATED"/>
    <property type="match status" value="1"/>
</dbReference>
<dbReference type="PANTHER" id="PTHR21091:SF169">
    <property type="entry name" value="UROPORPHYRINOGEN DECARBOXYLASE"/>
    <property type="match status" value="1"/>
</dbReference>
<dbReference type="Pfam" id="PF01208">
    <property type="entry name" value="URO-D"/>
    <property type="match status" value="1"/>
</dbReference>
<dbReference type="SUPFAM" id="SSF51726">
    <property type="entry name" value="UROD/MetE-like"/>
    <property type="match status" value="1"/>
</dbReference>
<dbReference type="PROSITE" id="PS00906">
    <property type="entry name" value="UROD_1"/>
    <property type="match status" value="1"/>
</dbReference>
<dbReference type="PROSITE" id="PS00907">
    <property type="entry name" value="UROD_2"/>
    <property type="match status" value="1"/>
</dbReference>
<evidence type="ECO:0000255" key="1">
    <source>
        <dbReference type="HAMAP-Rule" id="MF_00218"/>
    </source>
</evidence>
<comment type="function">
    <text evidence="1">Catalyzes the decarboxylation of four acetate groups of uroporphyrinogen-III to yield coproporphyrinogen-III.</text>
</comment>
<comment type="catalytic activity">
    <reaction evidence="1">
        <text>uroporphyrinogen III + 4 H(+) = coproporphyrinogen III + 4 CO2</text>
        <dbReference type="Rhea" id="RHEA:19865"/>
        <dbReference type="ChEBI" id="CHEBI:15378"/>
        <dbReference type="ChEBI" id="CHEBI:16526"/>
        <dbReference type="ChEBI" id="CHEBI:57308"/>
        <dbReference type="ChEBI" id="CHEBI:57309"/>
        <dbReference type="EC" id="4.1.1.37"/>
    </reaction>
</comment>
<comment type="pathway">
    <text evidence="1">Porphyrin-containing compound metabolism; protoporphyrin-IX biosynthesis; coproporphyrinogen-III from 5-aminolevulinate: step 4/4.</text>
</comment>
<comment type="subunit">
    <text evidence="1">Homodimer.</text>
</comment>
<comment type="subcellular location">
    <subcellularLocation>
        <location evidence="1">Cytoplasm</location>
    </subcellularLocation>
</comment>
<comment type="similarity">
    <text evidence="1">Belongs to the uroporphyrinogen decarboxylase family.</text>
</comment>
<sequence>MNKPILRVLRGEALPVPPVWLMRQAGRYLPEYREVRAKAGSFLGLATHPEWAAEVTLQPIRRFGMDAAILFSDILMLPWALGYGLHFAEGEGPVLPKLEEADIDRLDFSQLIPRIAPIMETVTRVREQLQQLHPETTLIGFAGAPFTVSCYMVDGGGAKEFPRTRHFAYTNPEAFDRLIARLTEATITYLSAQVEAGAEVLMLFDSWAGLLSPLSFARWVTAPARQITAALKARHPSVPVIGFPRLAGTLLQNYASETGVNAVGMDTSVDPAMARKMVPAEIALQGNLDPLALRAGGEAMRREVSSIRQAMAGHPHIFNLGHGIVPQTPPEHVAELLNLIRTI</sequence>
<keyword id="KW-0963">Cytoplasm</keyword>
<keyword id="KW-0210">Decarboxylase</keyword>
<keyword id="KW-0456">Lyase</keyword>
<keyword id="KW-0627">Porphyrin biosynthesis</keyword>
<keyword id="KW-1185">Reference proteome</keyword>
<accession>Q0BWA2</accession>
<protein>
    <recommendedName>
        <fullName evidence="1">Uroporphyrinogen decarboxylase</fullName>
        <shortName evidence="1">UPD</shortName>
        <shortName evidence="1">URO-D</shortName>
        <ecNumber evidence="1">4.1.1.37</ecNumber>
    </recommendedName>
</protein>
<reference key="1">
    <citation type="journal article" date="2007" name="J. Bacteriol.">
        <title>Genome sequence analysis of the emerging human pathogenic acetic acid bacterium Granulibacter bethesdensis.</title>
        <authorList>
            <person name="Greenberg D.E."/>
            <person name="Porcella S.F."/>
            <person name="Zelazny A.M."/>
            <person name="Virtaneva K."/>
            <person name="Sturdevant D.E."/>
            <person name="Kupko J.J. III"/>
            <person name="Barbian K.D."/>
            <person name="Babar A."/>
            <person name="Dorward D.W."/>
            <person name="Holland S.M."/>
        </authorList>
    </citation>
    <scope>NUCLEOTIDE SEQUENCE [LARGE SCALE GENOMIC DNA]</scope>
    <source>
        <strain>ATCC BAA-1260 / CGDNIH1</strain>
    </source>
</reference>
<organism>
    <name type="scientific">Granulibacter bethesdensis (strain ATCC BAA-1260 / CGDNIH1)</name>
    <dbReference type="NCBI Taxonomy" id="391165"/>
    <lineage>
        <taxon>Bacteria</taxon>
        <taxon>Pseudomonadati</taxon>
        <taxon>Pseudomonadota</taxon>
        <taxon>Alphaproteobacteria</taxon>
        <taxon>Acetobacterales</taxon>
        <taxon>Acetobacteraceae</taxon>
        <taxon>Granulibacter</taxon>
    </lineage>
</organism>
<proteinExistence type="inferred from homology"/>
<gene>
    <name evidence="1" type="primary">hemE</name>
    <name type="ordered locus">GbCGDNIH1_0002</name>
</gene>